<name>SYD_VIBCM</name>
<dbReference type="EC" id="6.1.1.12" evidence="1"/>
<dbReference type="EMBL" id="CP001233">
    <property type="protein sequence ID" value="ACP05438.1"/>
    <property type="molecule type" value="Genomic_DNA"/>
</dbReference>
<dbReference type="RefSeq" id="WP_001256500.1">
    <property type="nucleotide sequence ID" value="NC_012578.1"/>
</dbReference>
<dbReference type="SMR" id="C3LLL2"/>
<dbReference type="KEGG" id="vcm:VCM66_1121"/>
<dbReference type="HOGENOM" id="CLU_014330_3_2_6"/>
<dbReference type="Proteomes" id="UP000001217">
    <property type="component" value="Chromosome I"/>
</dbReference>
<dbReference type="GO" id="GO:0005737">
    <property type="term" value="C:cytoplasm"/>
    <property type="evidence" value="ECO:0007669"/>
    <property type="project" value="UniProtKB-SubCell"/>
</dbReference>
<dbReference type="GO" id="GO:0004815">
    <property type="term" value="F:aspartate-tRNA ligase activity"/>
    <property type="evidence" value="ECO:0007669"/>
    <property type="project" value="UniProtKB-UniRule"/>
</dbReference>
<dbReference type="GO" id="GO:0005524">
    <property type="term" value="F:ATP binding"/>
    <property type="evidence" value="ECO:0007669"/>
    <property type="project" value="UniProtKB-UniRule"/>
</dbReference>
<dbReference type="GO" id="GO:0003676">
    <property type="term" value="F:nucleic acid binding"/>
    <property type="evidence" value="ECO:0007669"/>
    <property type="project" value="InterPro"/>
</dbReference>
<dbReference type="GO" id="GO:0006422">
    <property type="term" value="P:aspartyl-tRNA aminoacylation"/>
    <property type="evidence" value="ECO:0007669"/>
    <property type="project" value="UniProtKB-UniRule"/>
</dbReference>
<dbReference type="CDD" id="cd00777">
    <property type="entry name" value="AspRS_core"/>
    <property type="match status" value="1"/>
</dbReference>
<dbReference type="CDD" id="cd04317">
    <property type="entry name" value="EcAspRS_like_N"/>
    <property type="match status" value="1"/>
</dbReference>
<dbReference type="FunFam" id="2.40.50.140:FF:000080">
    <property type="entry name" value="Aspartate--tRNA ligase"/>
    <property type="match status" value="1"/>
</dbReference>
<dbReference type="Gene3D" id="3.30.930.10">
    <property type="entry name" value="Bira Bifunctional Protein, Domain 2"/>
    <property type="match status" value="1"/>
</dbReference>
<dbReference type="Gene3D" id="3.30.1360.30">
    <property type="entry name" value="GAD-like domain"/>
    <property type="match status" value="1"/>
</dbReference>
<dbReference type="Gene3D" id="2.40.50.140">
    <property type="entry name" value="Nucleic acid-binding proteins"/>
    <property type="match status" value="1"/>
</dbReference>
<dbReference type="HAMAP" id="MF_00044">
    <property type="entry name" value="Asp_tRNA_synth_type1"/>
    <property type="match status" value="1"/>
</dbReference>
<dbReference type="InterPro" id="IPR004364">
    <property type="entry name" value="Aa-tRNA-synt_II"/>
</dbReference>
<dbReference type="InterPro" id="IPR006195">
    <property type="entry name" value="aa-tRNA-synth_II"/>
</dbReference>
<dbReference type="InterPro" id="IPR045864">
    <property type="entry name" value="aa-tRNA-synth_II/BPL/LPL"/>
</dbReference>
<dbReference type="InterPro" id="IPR004524">
    <property type="entry name" value="Asp-tRNA-ligase_1"/>
</dbReference>
<dbReference type="InterPro" id="IPR047089">
    <property type="entry name" value="Asp-tRNA-ligase_1_N"/>
</dbReference>
<dbReference type="InterPro" id="IPR002312">
    <property type="entry name" value="Asp/Asn-tRNA-synth_IIb"/>
</dbReference>
<dbReference type="InterPro" id="IPR047090">
    <property type="entry name" value="AspRS_core"/>
</dbReference>
<dbReference type="InterPro" id="IPR004115">
    <property type="entry name" value="GAD-like_sf"/>
</dbReference>
<dbReference type="InterPro" id="IPR029351">
    <property type="entry name" value="GAD_dom"/>
</dbReference>
<dbReference type="InterPro" id="IPR012340">
    <property type="entry name" value="NA-bd_OB-fold"/>
</dbReference>
<dbReference type="InterPro" id="IPR004365">
    <property type="entry name" value="NA-bd_OB_tRNA"/>
</dbReference>
<dbReference type="NCBIfam" id="TIGR00459">
    <property type="entry name" value="aspS_bact"/>
    <property type="match status" value="1"/>
</dbReference>
<dbReference type="NCBIfam" id="NF001750">
    <property type="entry name" value="PRK00476.1"/>
    <property type="match status" value="1"/>
</dbReference>
<dbReference type="PANTHER" id="PTHR22594:SF5">
    <property type="entry name" value="ASPARTATE--TRNA LIGASE, MITOCHONDRIAL"/>
    <property type="match status" value="1"/>
</dbReference>
<dbReference type="PANTHER" id="PTHR22594">
    <property type="entry name" value="ASPARTYL/LYSYL-TRNA SYNTHETASE"/>
    <property type="match status" value="1"/>
</dbReference>
<dbReference type="Pfam" id="PF02938">
    <property type="entry name" value="GAD"/>
    <property type="match status" value="1"/>
</dbReference>
<dbReference type="Pfam" id="PF00152">
    <property type="entry name" value="tRNA-synt_2"/>
    <property type="match status" value="1"/>
</dbReference>
<dbReference type="Pfam" id="PF01336">
    <property type="entry name" value="tRNA_anti-codon"/>
    <property type="match status" value="1"/>
</dbReference>
<dbReference type="PRINTS" id="PR01042">
    <property type="entry name" value="TRNASYNTHASP"/>
</dbReference>
<dbReference type="SUPFAM" id="SSF55681">
    <property type="entry name" value="Class II aaRS and biotin synthetases"/>
    <property type="match status" value="1"/>
</dbReference>
<dbReference type="SUPFAM" id="SSF55261">
    <property type="entry name" value="GAD domain-like"/>
    <property type="match status" value="1"/>
</dbReference>
<dbReference type="SUPFAM" id="SSF50249">
    <property type="entry name" value="Nucleic acid-binding proteins"/>
    <property type="match status" value="1"/>
</dbReference>
<dbReference type="PROSITE" id="PS50862">
    <property type="entry name" value="AA_TRNA_LIGASE_II"/>
    <property type="match status" value="1"/>
</dbReference>
<keyword id="KW-0030">Aminoacyl-tRNA synthetase</keyword>
<keyword id="KW-0067">ATP-binding</keyword>
<keyword id="KW-0963">Cytoplasm</keyword>
<keyword id="KW-0436">Ligase</keyword>
<keyword id="KW-0547">Nucleotide-binding</keyword>
<keyword id="KW-0648">Protein biosynthesis</keyword>
<reference key="1">
    <citation type="journal article" date="2008" name="PLoS ONE">
        <title>A recalibrated molecular clock and independent origins for the cholera pandemic clones.</title>
        <authorList>
            <person name="Feng L."/>
            <person name="Reeves P.R."/>
            <person name="Lan R."/>
            <person name="Ren Y."/>
            <person name="Gao C."/>
            <person name="Zhou Z."/>
            <person name="Ren Y."/>
            <person name="Cheng J."/>
            <person name="Wang W."/>
            <person name="Wang J."/>
            <person name="Qian W."/>
            <person name="Li D."/>
            <person name="Wang L."/>
        </authorList>
    </citation>
    <scope>NUCLEOTIDE SEQUENCE [LARGE SCALE GENOMIC DNA]</scope>
    <source>
        <strain>M66-2</strain>
    </source>
</reference>
<evidence type="ECO:0000255" key="1">
    <source>
        <dbReference type="HAMAP-Rule" id="MF_00044"/>
    </source>
</evidence>
<gene>
    <name evidence="1" type="primary">aspS</name>
    <name type="ordered locus">VCM66_1121</name>
</gene>
<comment type="function">
    <text evidence="1">Catalyzes the attachment of L-aspartate to tRNA(Asp) in a two-step reaction: L-aspartate is first activated by ATP to form Asp-AMP and then transferred to the acceptor end of tRNA(Asp).</text>
</comment>
<comment type="catalytic activity">
    <reaction evidence="1">
        <text>tRNA(Asp) + L-aspartate + ATP = L-aspartyl-tRNA(Asp) + AMP + diphosphate</text>
        <dbReference type="Rhea" id="RHEA:19649"/>
        <dbReference type="Rhea" id="RHEA-COMP:9660"/>
        <dbReference type="Rhea" id="RHEA-COMP:9678"/>
        <dbReference type="ChEBI" id="CHEBI:29991"/>
        <dbReference type="ChEBI" id="CHEBI:30616"/>
        <dbReference type="ChEBI" id="CHEBI:33019"/>
        <dbReference type="ChEBI" id="CHEBI:78442"/>
        <dbReference type="ChEBI" id="CHEBI:78516"/>
        <dbReference type="ChEBI" id="CHEBI:456215"/>
        <dbReference type="EC" id="6.1.1.12"/>
    </reaction>
</comment>
<comment type="subunit">
    <text evidence="1">Homodimer.</text>
</comment>
<comment type="subcellular location">
    <subcellularLocation>
        <location evidence="1">Cytoplasm</location>
    </subcellularLocation>
</comment>
<comment type="similarity">
    <text evidence="1">Belongs to the class-II aminoacyl-tRNA synthetase family. Type 1 subfamily.</text>
</comment>
<organism>
    <name type="scientific">Vibrio cholerae serotype O1 (strain M66-2)</name>
    <dbReference type="NCBI Taxonomy" id="579112"/>
    <lineage>
        <taxon>Bacteria</taxon>
        <taxon>Pseudomonadati</taxon>
        <taxon>Pseudomonadota</taxon>
        <taxon>Gammaproteobacteria</taxon>
        <taxon>Vibrionales</taxon>
        <taxon>Vibrionaceae</taxon>
        <taxon>Vibrio</taxon>
    </lineage>
</organism>
<accession>C3LLL2</accession>
<feature type="chain" id="PRO_1000199024" description="Aspartate--tRNA ligase">
    <location>
        <begin position="1"/>
        <end position="591"/>
    </location>
</feature>
<feature type="region of interest" description="Aspartate" evidence="1">
    <location>
        <begin position="195"/>
        <end position="198"/>
    </location>
</feature>
<feature type="binding site" evidence="1">
    <location>
        <position position="171"/>
    </location>
    <ligand>
        <name>L-aspartate</name>
        <dbReference type="ChEBI" id="CHEBI:29991"/>
    </ligand>
</feature>
<feature type="binding site" evidence="1">
    <location>
        <begin position="217"/>
        <end position="219"/>
    </location>
    <ligand>
        <name>ATP</name>
        <dbReference type="ChEBI" id="CHEBI:30616"/>
    </ligand>
</feature>
<feature type="binding site" evidence="1">
    <location>
        <position position="217"/>
    </location>
    <ligand>
        <name>L-aspartate</name>
        <dbReference type="ChEBI" id="CHEBI:29991"/>
    </ligand>
</feature>
<feature type="binding site" evidence="1">
    <location>
        <position position="226"/>
    </location>
    <ligand>
        <name>ATP</name>
        <dbReference type="ChEBI" id="CHEBI:30616"/>
    </ligand>
</feature>
<feature type="binding site" evidence="1">
    <location>
        <position position="448"/>
    </location>
    <ligand>
        <name>L-aspartate</name>
        <dbReference type="ChEBI" id="CHEBI:29991"/>
    </ligand>
</feature>
<feature type="binding site" evidence="1">
    <location>
        <position position="482"/>
    </location>
    <ligand>
        <name>ATP</name>
        <dbReference type="ChEBI" id="CHEBI:30616"/>
    </ligand>
</feature>
<feature type="binding site" evidence="1">
    <location>
        <position position="489"/>
    </location>
    <ligand>
        <name>L-aspartate</name>
        <dbReference type="ChEBI" id="CHEBI:29991"/>
    </ligand>
</feature>
<feature type="binding site" evidence="1">
    <location>
        <begin position="534"/>
        <end position="537"/>
    </location>
    <ligand>
        <name>ATP</name>
        <dbReference type="ChEBI" id="CHEBI:30616"/>
    </ligand>
</feature>
<sequence length="591" mass="65769">MRSHYCGHLNKSLVGQTVELCGWVNRRRDLGGLIFIDMRDREGIVQVVVDPDMADVFAVANQLRSEFCIKLTGEVRARPESQVNKEMATGEVELLARSLEIINRSDVLPLDFNQKNSEEQRLKYRYLDLRRPEMSDRIKLRAKASSFVRRFLDTHGFLDIETPVLTKATPEGARDYLVPSRVHKGSFYALPQSPQLFKQLLMMSGFDRYYQIVKCFRDEDLRADRQPEFTQIDIETSFMTAEQVRAVTEKMIREMWLELLNVDLGDFPIMPYSEAMRRFGSDKPDLRNPMELVDVADLLKDVDFKVFSGPANDPKGRVAALCIPGGAALTRKQIDEYTAFVAIYGAKGLAWLKVNDLAAGMEGIQSPVAKFLTEEIIQAIIERTQAQTGDIILFGADSAKVVAEALGALRLKAGKELGITNESAWAPLWVVDFPMFESDDEGNVAAMHHPFTSPLNLSPEQLKANPEEALSNAYDMVLNGYEVGGGSVRIHNAEMQSAVFDILGITPEEQRLKFGFLLDALKFGTPPHAGLAFGLDRLVMLLCGTENIRDVIAFPKTTAAACLMTDAPSLANPAALEELAIAVKLATKDKA</sequence>
<protein>
    <recommendedName>
        <fullName evidence="1">Aspartate--tRNA ligase</fullName>
        <ecNumber evidence="1">6.1.1.12</ecNumber>
    </recommendedName>
    <alternativeName>
        <fullName evidence="1">Aspartyl-tRNA synthetase</fullName>
        <shortName evidence="1">AspRS</shortName>
    </alternativeName>
</protein>
<proteinExistence type="inferred from homology"/>